<reference key="1">
    <citation type="journal article" date="2004" name="Proc. Natl. Acad. Sci. U.S.A.">
        <title>The diploid genome sequence of Candida albicans.</title>
        <authorList>
            <person name="Jones T."/>
            <person name="Federspiel N.A."/>
            <person name="Chibana H."/>
            <person name="Dungan J."/>
            <person name="Kalman S."/>
            <person name="Magee B.B."/>
            <person name="Newport G."/>
            <person name="Thorstenson Y.R."/>
            <person name="Agabian N."/>
            <person name="Magee P.T."/>
            <person name="Davis R.W."/>
            <person name="Scherer S."/>
        </authorList>
    </citation>
    <scope>NUCLEOTIDE SEQUENCE [LARGE SCALE GENOMIC DNA]</scope>
    <source>
        <strain>SC5314 / ATCC MYA-2876</strain>
    </source>
</reference>
<reference key="2">
    <citation type="journal article" date="2007" name="Genome Biol.">
        <title>Assembly of the Candida albicans genome into sixteen supercontigs aligned on the eight chromosomes.</title>
        <authorList>
            <person name="van het Hoog M."/>
            <person name="Rast T.J."/>
            <person name="Martchenko M."/>
            <person name="Grindle S."/>
            <person name="Dignard D."/>
            <person name="Hogues H."/>
            <person name="Cuomo C."/>
            <person name="Berriman M."/>
            <person name="Scherer S."/>
            <person name="Magee B.B."/>
            <person name="Whiteway M."/>
            <person name="Chibana H."/>
            <person name="Nantel A."/>
            <person name="Magee P.T."/>
        </authorList>
    </citation>
    <scope>GENOME REANNOTATION</scope>
    <source>
        <strain>SC5314 / ATCC MYA-2876</strain>
    </source>
</reference>
<reference key="3">
    <citation type="journal article" date="2013" name="Genome Biol.">
        <title>Assembly of a phased diploid Candida albicans genome facilitates allele-specific measurements and provides a simple model for repeat and indel structure.</title>
        <authorList>
            <person name="Muzzey D."/>
            <person name="Schwartz K."/>
            <person name="Weissman J.S."/>
            <person name="Sherlock G."/>
        </authorList>
    </citation>
    <scope>NUCLEOTIDE SEQUENCE [LARGE SCALE GENOMIC DNA]</scope>
    <scope>GENOME REANNOTATION</scope>
    <source>
        <strain>SC5314 / ATCC MYA-2876</strain>
    </source>
</reference>
<reference key="4">
    <citation type="journal article" date="2009" name="Infect. Immun.">
        <title>BAR domain proteins Rvs161 and Rvs167 contribute to Candida albicans endocytosis, morphogenesis, and virulence.</title>
        <authorList>
            <person name="Douglas L.M."/>
            <person name="Martin S.W."/>
            <person name="Konopka J.B."/>
        </authorList>
    </citation>
    <scope>IDENTIFICATION</scope>
    <scope>DISRUPTION PHENOTYPE</scope>
</reference>
<keyword id="KW-0175">Coiled coil</keyword>
<keyword id="KW-0963">Cytoplasm</keyword>
<keyword id="KW-0206">Cytoskeleton</keyword>
<keyword id="KW-1185">Reference proteome</keyword>
<feature type="chain" id="PRO_0000430557" description="RVS161-like protein RVS162">
    <location>
        <begin position="1"/>
        <end position="335"/>
    </location>
</feature>
<feature type="domain" description="BAR" evidence="3">
    <location>
        <begin position="17"/>
        <end position="310"/>
    </location>
</feature>
<feature type="region of interest" description="Disordered" evidence="4">
    <location>
        <begin position="105"/>
        <end position="127"/>
    </location>
</feature>
<feature type="coiled-coil region" evidence="2">
    <location>
        <begin position="30"/>
        <end position="56"/>
    </location>
</feature>
<feature type="coiled-coil region" evidence="2">
    <location>
        <begin position="222"/>
        <end position="259"/>
    </location>
</feature>
<feature type="compositionally biased region" description="Acidic residues" evidence="4">
    <location>
        <begin position="107"/>
        <end position="118"/>
    </location>
</feature>
<comment type="function">
    <text evidence="7">Component of a cytoskeletal structure that is required for membrane curvature.</text>
</comment>
<comment type="subcellular location">
    <subcellularLocation>
        <location evidence="1">Cytoplasm</location>
        <location evidence="1">Cytoskeleton</location>
    </subcellularLocation>
</comment>
<comment type="disruption phenotype">
    <text evidence="5">Does not display the endocytic, hyphal growth, virulence, or cell wall defects exhibited by disruption in related RVS161 or RVS167.</text>
</comment>
<evidence type="ECO:0000250" key="1">
    <source>
        <dbReference type="UniProtKB" id="P25343"/>
    </source>
</evidence>
<evidence type="ECO:0000255" key="2"/>
<evidence type="ECO:0000255" key="3">
    <source>
        <dbReference type="PROSITE-ProRule" id="PRU00361"/>
    </source>
</evidence>
<evidence type="ECO:0000256" key="4">
    <source>
        <dbReference type="SAM" id="MobiDB-lite"/>
    </source>
</evidence>
<evidence type="ECO:0000269" key="5">
    <source>
    </source>
</evidence>
<evidence type="ECO:0000303" key="6">
    <source>
    </source>
</evidence>
<evidence type="ECO:0000305" key="7"/>
<protein>
    <recommendedName>
        <fullName evidence="7">RVS161-like protein RVS162</fullName>
    </recommendedName>
</protein>
<organism>
    <name type="scientific">Candida albicans (strain SC5314 / ATCC MYA-2876)</name>
    <name type="common">Yeast</name>
    <dbReference type="NCBI Taxonomy" id="237561"/>
    <lineage>
        <taxon>Eukaryota</taxon>
        <taxon>Fungi</taxon>
        <taxon>Dikarya</taxon>
        <taxon>Ascomycota</taxon>
        <taxon>Saccharomycotina</taxon>
        <taxon>Pichiomycetes</taxon>
        <taxon>Debaryomycetaceae</taxon>
        <taxon>Candida/Lodderomyces clade</taxon>
        <taxon>Candida</taxon>
    </lineage>
</organism>
<dbReference type="EMBL" id="CP017623">
    <property type="protein sequence ID" value="AOW26888.1"/>
    <property type="molecule type" value="Genomic_DNA"/>
</dbReference>
<dbReference type="RefSeq" id="XP_711567.2">
    <property type="nucleotide sequence ID" value="XM_706475.2"/>
</dbReference>
<dbReference type="SMR" id="Q59PE4"/>
<dbReference type="STRING" id="237561.Q59PE4"/>
<dbReference type="EnsemblFungi" id="C1_12730W_A-T">
    <property type="protein sequence ID" value="C1_12730W_A-T-p1"/>
    <property type="gene ID" value="C1_12730W_A"/>
</dbReference>
<dbReference type="GeneID" id="3646820"/>
<dbReference type="KEGG" id="cal:CAALFM_C112730WA"/>
<dbReference type="CGD" id="CAL0000191779">
    <property type="gene designation" value="RVS162"/>
</dbReference>
<dbReference type="VEuPathDB" id="FungiDB:C1_12730W_A"/>
<dbReference type="eggNOG" id="KOG3771">
    <property type="taxonomic scope" value="Eukaryota"/>
</dbReference>
<dbReference type="HOGENOM" id="CLU_072096_0_0_1"/>
<dbReference type="InParanoid" id="Q59PE4"/>
<dbReference type="OrthoDB" id="446293at2759"/>
<dbReference type="Proteomes" id="UP000000559">
    <property type="component" value="Chromosome 1"/>
</dbReference>
<dbReference type="GO" id="GO:0030479">
    <property type="term" value="C:actin cortical patch"/>
    <property type="evidence" value="ECO:0000318"/>
    <property type="project" value="GO_Central"/>
</dbReference>
<dbReference type="GO" id="GO:0015629">
    <property type="term" value="C:actin cytoskeleton"/>
    <property type="evidence" value="ECO:0000318"/>
    <property type="project" value="GO_Central"/>
</dbReference>
<dbReference type="GO" id="GO:0043332">
    <property type="term" value="C:mating projection tip"/>
    <property type="evidence" value="ECO:0000318"/>
    <property type="project" value="GO_Central"/>
</dbReference>
<dbReference type="GO" id="GO:0031097">
    <property type="term" value="C:medial cortex"/>
    <property type="evidence" value="ECO:0000318"/>
    <property type="project" value="GO_Central"/>
</dbReference>
<dbReference type="GO" id="GO:1990528">
    <property type="term" value="C:Rvs161p-Rvs167p complex"/>
    <property type="evidence" value="ECO:0000318"/>
    <property type="project" value="GO_Central"/>
</dbReference>
<dbReference type="GO" id="GO:0051666">
    <property type="term" value="P:actin cortical patch localization"/>
    <property type="evidence" value="ECO:0000318"/>
    <property type="project" value="GO_Central"/>
</dbReference>
<dbReference type="GO" id="GO:0006897">
    <property type="term" value="P:endocytosis"/>
    <property type="evidence" value="ECO:0000318"/>
    <property type="project" value="GO_Central"/>
</dbReference>
<dbReference type="GO" id="GO:0097320">
    <property type="term" value="P:plasma membrane tubulation"/>
    <property type="evidence" value="ECO:0000318"/>
    <property type="project" value="GO_Central"/>
</dbReference>
<dbReference type="Gene3D" id="1.20.1270.60">
    <property type="entry name" value="Arfaptin homology (AH) domain/BAR domain"/>
    <property type="match status" value="1"/>
</dbReference>
<dbReference type="InterPro" id="IPR027267">
    <property type="entry name" value="AH/BAR_dom_sf"/>
</dbReference>
<dbReference type="InterPro" id="IPR004148">
    <property type="entry name" value="BAR_dom"/>
</dbReference>
<dbReference type="InterPro" id="IPR046982">
    <property type="entry name" value="BIN3/RVS161-like"/>
</dbReference>
<dbReference type="PANTHER" id="PTHR47174">
    <property type="entry name" value="BRIDGING INTEGRATOR 3"/>
    <property type="match status" value="1"/>
</dbReference>
<dbReference type="PANTHER" id="PTHR47174:SF3">
    <property type="entry name" value="BRIDGING INTEGRATOR 3"/>
    <property type="match status" value="1"/>
</dbReference>
<dbReference type="Pfam" id="PF03114">
    <property type="entry name" value="BAR"/>
    <property type="match status" value="1"/>
</dbReference>
<dbReference type="SMART" id="SM00721">
    <property type="entry name" value="BAR"/>
    <property type="match status" value="1"/>
</dbReference>
<dbReference type="SUPFAM" id="SSF103657">
    <property type="entry name" value="BAR/IMD domain-like"/>
    <property type="match status" value="1"/>
</dbReference>
<dbReference type="PROSITE" id="PS51021">
    <property type="entry name" value="BAR"/>
    <property type="match status" value="1"/>
</dbReference>
<proteinExistence type="inferred from homology"/>
<gene>
    <name evidence="6" type="primary">RVS162</name>
    <name type="ordered locus">CAALFM_C112730WA</name>
    <name type="ORF">CaO19.6349</name>
</gene>
<accession>Q59PE4</accession>
<accession>A0A1D8PFG9</accession>
<name>RV162_CANAL</name>
<sequence>MSWIGIKKAINRAGTQVMLKTGHIEQTIDKEYEFQEKRYRTMEENSIKLQKNLRLYLDSLRLLTNSQINIAESLNSFYGTNNDKRSSNISRTGSVNTGDKIQTIHEEEGEEKEEEENDNTTTTTTTTTTTITTTNTTYNYNNLIQEYYATIKQLNDSCIANLENPYNQTVLNPIARFNSYYIEINEIIKKRHNKLLDYDAMKNKLRKLIENPTTNISPSMKTNIIELNHNQYEEKLKIYNQELTEVESKYVEINNQLLIELPKLINHRISYFDPSFESFVKIQLRFFNENYHVLNQLQLKLDAQTRQDYIEGKLEDRIDDVLRKMKKLDITSGLD</sequence>